<evidence type="ECO:0000255" key="1">
    <source>
        <dbReference type="HAMAP-Rule" id="MF_01693"/>
    </source>
</evidence>
<reference key="1">
    <citation type="submission" date="2007-06" db="EMBL/GenBank/DDBJ databases">
        <authorList>
            <person name="Dodson R.J."/>
            <person name="Harkins D."/>
            <person name="Paulsen I.T."/>
        </authorList>
    </citation>
    <scope>NUCLEOTIDE SEQUENCE [LARGE SCALE GENOMIC DNA]</scope>
    <source>
        <strain>DSM 24068 / PA7</strain>
    </source>
</reference>
<proteinExistence type="inferred from homology"/>
<keyword id="KW-0093">Biotin biosynthesis</keyword>
<keyword id="KW-0663">Pyridoxal phosphate</keyword>
<keyword id="KW-0808">Transferase</keyword>
<protein>
    <recommendedName>
        <fullName evidence="1">8-amino-7-oxononanoate synthase</fullName>
        <shortName evidence="1">AONS</shortName>
        <ecNumber evidence="1">2.3.1.47</ecNumber>
    </recommendedName>
    <alternativeName>
        <fullName evidence="1">7-keto-8-amino-pelargonic acid synthase</fullName>
        <shortName evidence="1">7-KAP synthase</shortName>
        <shortName evidence="1">KAPA synthase</shortName>
    </alternativeName>
    <alternativeName>
        <fullName evidence="1">8-amino-7-ketopelargonate synthase</fullName>
    </alternativeName>
</protein>
<name>BIOF_PSEP7</name>
<dbReference type="EC" id="2.3.1.47" evidence="1"/>
<dbReference type="EMBL" id="CP000744">
    <property type="protein sequence ID" value="ABR81961.1"/>
    <property type="molecule type" value="Genomic_DNA"/>
</dbReference>
<dbReference type="RefSeq" id="WP_012074070.1">
    <property type="nucleotide sequence ID" value="NC_009656.1"/>
</dbReference>
<dbReference type="SMR" id="A6UYW1"/>
<dbReference type="KEGG" id="pap:PSPA7_0601"/>
<dbReference type="HOGENOM" id="CLU_015846_11_0_6"/>
<dbReference type="UniPathway" id="UPA00078"/>
<dbReference type="Proteomes" id="UP000001582">
    <property type="component" value="Chromosome"/>
</dbReference>
<dbReference type="GO" id="GO:0008710">
    <property type="term" value="F:8-amino-7-oxononanoate synthase activity"/>
    <property type="evidence" value="ECO:0007669"/>
    <property type="project" value="UniProtKB-UniRule"/>
</dbReference>
<dbReference type="GO" id="GO:0030170">
    <property type="term" value="F:pyridoxal phosphate binding"/>
    <property type="evidence" value="ECO:0007669"/>
    <property type="project" value="UniProtKB-UniRule"/>
</dbReference>
<dbReference type="GO" id="GO:0009102">
    <property type="term" value="P:biotin biosynthetic process"/>
    <property type="evidence" value="ECO:0007669"/>
    <property type="project" value="UniProtKB-UniRule"/>
</dbReference>
<dbReference type="CDD" id="cd06454">
    <property type="entry name" value="KBL_like"/>
    <property type="match status" value="1"/>
</dbReference>
<dbReference type="Gene3D" id="3.90.1150.10">
    <property type="entry name" value="Aspartate Aminotransferase, domain 1"/>
    <property type="match status" value="1"/>
</dbReference>
<dbReference type="Gene3D" id="3.40.640.10">
    <property type="entry name" value="Type I PLP-dependent aspartate aminotransferase-like (Major domain)"/>
    <property type="match status" value="1"/>
</dbReference>
<dbReference type="HAMAP" id="MF_01693">
    <property type="entry name" value="BioF_aminotrans_2"/>
    <property type="match status" value="1"/>
</dbReference>
<dbReference type="InterPro" id="IPR001917">
    <property type="entry name" value="Aminotrans_II_pyridoxalP_BS"/>
</dbReference>
<dbReference type="InterPro" id="IPR004839">
    <property type="entry name" value="Aminotransferase_I/II_large"/>
</dbReference>
<dbReference type="InterPro" id="IPR050087">
    <property type="entry name" value="AON_synthase_class-II"/>
</dbReference>
<dbReference type="InterPro" id="IPR004723">
    <property type="entry name" value="AONS_Archaea/Proteobacteria"/>
</dbReference>
<dbReference type="InterPro" id="IPR022834">
    <property type="entry name" value="AONS_Proteobacteria"/>
</dbReference>
<dbReference type="InterPro" id="IPR015424">
    <property type="entry name" value="PyrdxlP-dep_Trfase"/>
</dbReference>
<dbReference type="InterPro" id="IPR015421">
    <property type="entry name" value="PyrdxlP-dep_Trfase_major"/>
</dbReference>
<dbReference type="InterPro" id="IPR015422">
    <property type="entry name" value="PyrdxlP-dep_Trfase_small"/>
</dbReference>
<dbReference type="NCBIfam" id="TIGR00858">
    <property type="entry name" value="bioF"/>
    <property type="match status" value="1"/>
</dbReference>
<dbReference type="PANTHER" id="PTHR13693:SF100">
    <property type="entry name" value="8-AMINO-7-OXONONANOATE SYNTHASE"/>
    <property type="match status" value="1"/>
</dbReference>
<dbReference type="PANTHER" id="PTHR13693">
    <property type="entry name" value="CLASS II AMINOTRANSFERASE/8-AMINO-7-OXONONANOATE SYNTHASE"/>
    <property type="match status" value="1"/>
</dbReference>
<dbReference type="Pfam" id="PF00155">
    <property type="entry name" value="Aminotran_1_2"/>
    <property type="match status" value="1"/>
</dbReference>
<dbReference type="SUPFAM" id="SSF53383">
    <property type="entry name" value="PLP-dependent transferases"/>
    <property type="match status" value="1"/>
</dbReference>
<dbReference type="PROSITE" id="PS00599">
    <property type="entry name" value="AA_TRANSFER_CLASS_2"/>
    <property type="match status" value="1"/>
</dbReference>
<comment type="function">
    <text evidence="1">Catalyzes the decarboxylative condensation of pimeloyl-[acyl-carrier protein] and L-alanine to produce 8-amino-7-oxononanoate (AON), [acyl-carrier protein], and carbon dioxide.</text>
</comment>
<comment type="catalytic activity">
    <reaction evidence="1">
        <text>6-carboxyhexanoyl-[ACP] + L-alanine + H(+) = (8S)-8-amino-7-oxononanoate + holo-[ACP] + CO2</text>
        <dbReference type="Rhea" id="RHEA:42288"/>
        <dbReference type="Rhea" id="RHEA-COMP:9685"/>
        <dbReference type="Rhea" id="RHEA-COMP:9955"/>
        <dbReference type="ChEBI" id="CHEBI:15378"/>
        <dbReference type="ChEBI" id="CHEBI:16526"/>
        <dbReference type="ChEBI" id="CHEBI:57972"/>
        <dbReference type="ChEBI" id="CHEBI:64479"/>
        <dbReference type="ChEBI" id="CHEBI:78846"/>
        <dbReference type="ChEBI" id="CHEBI:149468"/>
        <dbReference type="EC" id="2.3.1.47"/>
    </reaction>
</comment>
<comment type="cofactor">
    <cofactor evidence="1">
        <name>pyridoxal 5'-phosphate</name>
        <dbReference type="ChEBI" id="CHEBI:597326"/>
    </cofactor>
</comment>
<comment type="pathway">
    <text evidence="1">Cofactor biosynthesis; biotin biosynthesis.</text>
</comment>
<comment type="subunit">
    <text evidence="1">Homodimer.</text>
</comment>
<comment type="similarity">
    <text evidence="1">Belongs to the class-II pyridoxal-phosphate-dependent aminotransferase family. BioF subfamily.</text>
</comment>
<accession>A6UYW1</accession>
<gene>
    <name evidence="1" type="primary">bioF</name>
    <name type="ordered locus">PSPA7_0601</name>
</gene>
<organism>
    <name type="scientific">Pseudomonas paraeruginosa (strain DSM 24068 / PA7)</name>
    <name type="common">Pseudomonas aeruginosa (strain PA7)</name>
    <dbReference type="NCBI Taxonomy" id="381754"/>
    <lineage>
        <taxon>Bacteria</taxon>
        <taxon>Pseudomonadati</taxon>
        <taxon>Pseudomonadota</taxon>
        <taxon>Gammaproteobacteria</taxon>
        <taxon>Pseudomonadales</taxon>
        <taxon>Pseudomonadaceae</taxon>
        <taxon>Pseudomonas</taxon>
        <taxon>Pseudomonas paraeruginosa</taxon>
    </lineage>
</organism>
<sequence>MSFDLASRLAARRAEDLYRQRPLLQSAQGPDVVVDGQPLLAFCSNDYLGLASHPEVIAALRAGAERWGVGGGASHLVVGHSGPHHELELALAEFTGRPRALLFSTGYMANLGAVTALVGKGDTVLEDRLNHASLLDAGLLSGARFSRYLHNDPASLAARLDKAEGNTLVVTDGVFSMDGNLADLPALAAVAQARGAWLMVDDAHGFGPLGAAGGGIVEHFGLGQEQVPVLIGTLGKGFGTAGAFVAGSEELIETLVQYARPYIYTTSQPPAVACATLKSLELLRRESWRREHLAALIARFRRGAEALGLTLMDSFTPIQPILVGGSRQAVALADMLRARGIMVGAIRPPTVPANSARLRVTLSAAHSEAQVDRLLEALGESWRQLSSSLLAEIEAEEGDDA</sequence>
<feature type="chain" id="PRO_0000381072" description="8-amino-7-oxononanoate synthase">
    <location>
        <begin position="1"/>
        <end position="401"/>
    </location>
</feature>
<feature type="binding site" evidence="1">
    <location>
        <position position="19"/>
    </location>
    <ligand>
        <name>substrate</name>
    </ligand>
</feature>
<feature type="binding site" evidence="1">
    <location>
        <begin position="106"/>
        <end position="107"/>
    </location>
    <ligand>
        <name>pyridoxal 5'-phosphate</name>
        <dbReference type="ChEBI" id="CHEBI:597326"/>
    </ligand>
</feature>
<feature type="binding site" evidence="1">
    <location>
        <position position="131"/>
    </location>
    <ligand>
        <name>substrate</name>
    </ligand>
</feature>
<feature type="binding site" evidence="1">
    <location>
        <position position="176"/>
    </location>
    <ligand>
        <name>pyridoxal 5'-phosphate</name>
        <dbReference type="ChEBI" id="CHEBI:597326"/>
    </ligand>
</feature>
<feature type="binding site" evidence="1">
    <location>
        <position position="204"/>
    </location>
    <ligand>
        <name>pyridoxal 5'-phosphate</name>
        <dbReference type="ChEBI" id="CHEBI:597326"/>
    </ligand>
</feature>
<feature type="binding site" evidence="1">
    <location>
        <position position="233"/>
    </location>
    <ligand>
        <name>pyridoxal 5'-phosphate</name>
        <dbReference type="ChEBI" id="CHEBI:597326"/>
    </ligand>
</feature>
<feature type="binding site" evidence="1">
    <location>
        <position position="350"/>
    </location>
    <ligand>
        <name>substrate</name>
    </ligand>
</feature>
<feature type="modified residue" description="N6-(pyridoxal phosphate)lysine" evidence="1">
    <location>
        <position position="236"/>
    </location>
</feature>